<keyword id="KW-0067">ATP-binding</keyword>
<keyword id="KW-0131">Cell cycle</keyword>
<keyword id="KW-0132">Cell division</keyword>
<keyword id="KW-0133">Cell shape</keyword>
<keyword id="KW-0961">Cell wall biogenesis/degradation</keyword>
<keyword id="KW-0963">Cytoplasm</keyword>
<keyword id="KW-0436">Ligase</keyword>
<keyword id="KW-0547">Nucleotide-binding</keyword>
<keyword id="KW-0573">Peptidoglycan synthesis</keyword>
<protein>
    <recommendedName>
        <fullName evidence="1">UDP-N-acetylmuramate--L-alanine ligase</fullName>
        <ecNumber evidence="1">6.3.2.8</ecNumber>
    </recommendedName>
    <alternativeName>
        <fullName evidence="1">UDP-N-acetylmuramoyl-L-alanine synthetase</fullName>
    </alternativeName>
</protein>
<name>MURC_CALS8</name>
<proteinExistence type="inferred from homology"/>
<dbReference type="EC" id="6.3.2.8" evidence="1"/>
<dbReference type="EMBL" id="CP000679">
    <property type="protein sequence ID" value="ABP65980.1"/>
    <property type="molecule type" value="Genomic_DNA"/>
</dbReference>
<dbReference type="RefSeq" id="WP_011915935.1">
    <property type="nucleotide sequence ID" value="NC_009437.1"/>
</dbReference>
<dbReference type="SMR" id="A4XGE5"/>
<dbReference type="STRING" id="351627.Csac_0339"/>
<dbReference type="KEGG" id="csc:Csac_0339"/>
<dbReference type="eggNOG" id="COG0773">
    <property type="taxonomic scope" value="Bacteria"/>
</dbReference>
<dbReference type="HOGENOM" id="CLU_028104_1_0_9"/>
<dbReference type="OrthoDB" id="9804126at2"/>
<dbReference type="UniPathway" id="UPA00219"/>
<dbReference type="Proteomes" id="UP000000256">
    <property type="component" value="Chromosome"/>
</dbReference>
<dbReference type="GO" id="GO:0005737">
    <property type="term" value="C:cytoplasm"/>
    <property type="evidence" value="ECO:0007669"/>
    <property type="project" value="UniProtKB-SubCell"/>
</dbReference>
<dbReference type="GO" id="GO:0005524">
    <property type="term" value="F:ATP binding"/>
    <property type="evidence" value="ECO:0007669"/>
    <property type="project" value="UniProtKB-UniRule"/>
</dbReference>
<dbReference type="GO" id="GO:0008763">
    <property type="term" value="F:UDP-N-acetylmuramate-L-alanine ligase activity"/>
    <property type="evidence" value="ECO:0007669"/>
    <property type="project" value="UniProtKB-UniRule"/>
</dbReference>
<dbReference type="GO" id="GO:0051301">
    <property type="term" value="P:cell division"/>
    <property type="evidence" value="ECO:0007669"/>
    <property type="project" value="UniProtKB-KW"/>
</dbReference>
<dbReference type="GO" id="GO:0071555">
    <property type="term" value="P:cell wall organization"/>
    <property type="evidence" value="ECO:0007669"/>
    <property type="project" value="UniProtKB-KW"/>
</dbReference>
<dbReference type="GO" id="GO:0009252">
    <property type="term" value="P:peptidoglycan biosynthetic process"/>
    <property type="evidence" value="ECO:0007669"/>
    <property type="project" value="UniProtKB-UniRule"/>
</dbReference>
<dbReference type="GO" id="GO:0008360">
    <property type="term" value="P:regulation of cell shape"/>
    <property type="evidence" value="ECO:0007669"/>
    <property type="project" value="UniProtKB-KW"/>
</dbReference>
<dbReference type="Gene3D" id="3.90.190.20">
    <property type="entry name" value="Mur ligase, C-terminal domain"/>
    <property type="match status" value="1"/>
</dbReference>
<dbReference type="Gene3D" id="3.40.1190.10">
    <property type="entry name" value="Mur-like, catalytic domain"/>
    <property type="match status" value="1"/>
</dbReference>
<dbReference type="Gene3D" id="3.40.50.720">
    <property type="entry name" value="NAD(P)-binding Rossmann-like Domain"/>
    <property type="match status" value="1"/>
</dbReference>
<dbReference type="HAMAP" id="MF_00046">
    <property type="entry name" value="MurC"/>
    <property type="match status" value="1"/>
</dbReference>
<dbReference type="InterPro" id="IPR036565">
    <property type="entry name" value="Mur-like_cat_sf"/>
</dbReference>
<dbReference type="InterPro" id="IPR004101">
    <property type="entry name" value="Mur_ligase_C"/>
</dbReference>
<dbReference type="InterPro" id="IPR036615">
    <property type="entry name" value="Mur_ligase_C_dom_sf"/>
</dbReference>
<dbReference type="InterPro" id="IPR013221">
    <property type="entry name" value="Mur_ligase_cen"/>
</dbReference>
<dbReference type="InterPro" id="IPR000713">
    <property type="entry name" value="Mur_ligase_N"/>
</dbReference>
<dbReference type="InterPro" id="IPR050061">
    <property type="entry name" value="MurCDEF_pg_biosynth"/>
</dbReference>
<dbReference type="InterPro" id="IPR005758">
    <property type="entry name" value="UDP-N-AcMur_Ala_ligase_MurC"/>
</dbReference>
<dbReference type="NCBIfam" id="TIGR01082">
    <property type="entry name" value="murC"/>
    <property type="match status" value="1"/>
</dbReference>
<dbReference type="PANTHER" id="PTHR43445:SF3">
    <property type="entry name" value="UDP-N-ACETYLMURAMATE--L-ALANINE LIGASE"/>
    <property type="match status" value="1"/>
</dbReference>
<dbReference type="PANTHER" id="PTHR43445">
    <property type="entry name" value="UDP-N-ACETYLMURAMATE--L-ALANINE LIGASE-RELATED"/>
    <property type="match status" value="1"/>
</dbReference>
<dbReference type="Pfam" id="PF01225">
    <property type="entry name" value="Mur_ligase"/>
    <property type="match status" value="1"/>
</dbReference>
<dbReference type="Pfam" id="PF02875">
    <property type="entry name" value="Mur_ligase_C"/>
    <property type="match status" value="1"/>
</dbReference>
<dbReference type="Pfam" id="PF08245">
    <property type="entry name" value="Mur_ligase_M"/>
    <property type="match status" value="1"/>
</dbReference>
<dbReference type="SUPFAM" id="SSF51984">
    <property type="entry name" value="MurCD N-terminal domain"/>
    <property type="match status" value="1"/>
</dbReference>
<dbReference type="SUPFAM" id="SSF53623">
    <property type="entry name" value="MurD-like peptide ligases, catalytic domain"/>
    <property type="match status" value="1"/>
</dbReference>
<dbReference type="SUPFAM" id="SSF53244">
    <property type="entry name" value="MurD-like peptide ligases, peptide-binding domain"/>
    <property type="match status" value="1"/>
</dbReference>
<comment type="function">
    <text evidence="1">Cell wall formation.</text>
</comment>
<comment type="catalytic activity">
    <reaction evidence="1">
        <text>UDP-N-acetyl-alpha-D-muramate + L-alanine + ATP = UDP-N-acetyl-alpha-D-muramoyl-L-alanine + ADP + phosphate + H(+)</text>
        <dbReference type="Rhea" id="RHEA:23372"/>
        <dbReference type="ChEBI" id="CHEBI:15378"/>
        <dbReference type="ChEBI" id="CHEBI:30616"/>
        <dbReference type="ChEBI" id="CHEBI:43474"/>
        <dbReference type="ChEBI" id="CHEBI:57972"/>
        <dbReference type="ChEBI" id="CHEBI:70757"/>
        <dbReference type="ChEBI" id="CHEBI:83898"/>
        <dbReference type="ChEBI" id="CHEBI:456216"/>
        <dbReference type="EC" id="6.3.2.8"/>
    </reaction>
</comment>
<comment type="pathway">
    <text evidence="1">Cell wall biogenesis; peptidoglycan biosynthesis.</text>
</comment>
<comment type="subcellular location">
    <subcellularLocation>
        <location evidence="1">Cytoplasm</location>
    </subcellularLocation>
</comment>
<comment type="similarity">
    <text evidence="1">Belongs to the MurCDEF family.</text>
</comment>
<evidence type="ECO:0000255" key="1">
    <source>
        <dbReference type="HAMAP-Rule" id="MF_00046"/>
    </source>
</evidence>
<accession>A4XGE5</accession>
<reference key="1">
    <citation type="submission" date="2007-04" db="EMBL/GenBank/DDBJ databases">
        <title>Genome sequence of the thermophilic hydrogen-producing bacterium Caldicellulosiruptor saccharolyticus DSM 8903.</title>
        <authorList>
            <person name="Copeland A."/>
            <person name="Lucas S."/>
            <person name="Lapidus A."/>
            <person name="Barry K."/>
            <person name="Detter J.C."/>
            <person name="Glavina del Rio T."/>
            <person name="Hammon N."/>
            <person name="Israni S."/>
            <person name="Dalin E."/>
            <person name="Tice H."/>
            <person name="Pitluck S."/>
            <person name="Kiss H."/>
            <person name="Brettin T."/>
            <person name="Bruce D."/>
            <person name="Han C."/>
            <person name="Schmutz J."/>
            <person name="Larimer F."/>
            <person name="Land M."/>
            <person name="Hauser L."/>
            <person name="Kyrpides N."/>
            <person name="Lykidis A."/>
            <person name="van de Werken H.J.G."/>
            <person name="Verhaart M.R.A."/>
            <person name="VanFossen A.L."/>
            <person name="Lewis D.L."/>
            <person name="Nichols J.D."/>
            <person name="Goorissen H.P."/>
            <person name="van Niel E.W.J."/>
            <person name="Stams F.J.M."/>
            <person name="Willquist K.U."/>
            <person name="Ward D.E."/>
            <person name="van der Oost J."/>
            <person name="Kelly R.M."/>
            <person name="Kengen S.M.W."/>
            <person name="Richardson P."/>
        </authorList>
    </citation>
    <scope>NUCLEOTIDE SEQUENCE [LARGE SCALE GENOMIC DNA]</scope>
    <source>
        <strain>ATCC 43494 / DSM 8903 / Tp8T 6331</strain>
    </source>
</reference>
<gene>
    <name evidence="1" type="primary">murC</name>
    <name type="ordered locus">Csac_0339</name>
</gene>
<sequence>MNKFFLIGIGGISMSAIALILKNHGHIVEGSDMQESITTRMLREKGINVYIGHDENHIKGDEIVIFTAAIPKDNPELVKAKRLGLKVYERAEFLGMLMKDYKNVIAVSGTHGKTTTTSMIGYILKKALLNPTVLVGAFVKQLGGNFCIGSSEYLVVEACEYVDSFLNFNPSIGVILNIDNDHLDYFKDIESIKDSFRKFALKIPQNGFIVANLDDENVYSVASYLKQNVIYFSTKTKADFWADNITSCNGYYEFDVVNKDFKHLCHIKLNIPGFHNVYNSLAAFSVAYTLGIDKNTIKEAIFEFCGASRRLEKLGKIDGIVLYDDYAHHPTEIEATLRTLKKLAKEKVIVIFQPHTFSRLKSLMEGFVKSLSLADKVIVTDVYAAREKNVYGVSSKDLYEKLKKAGVDCEYIDQFEKIAEYVLNTAQKGDIVATIGAGDVNKCIELILDKSPVKS</sequence>
<feature type="chain" id="PRO_1000004327" description="UDP-N-acetylmuramate--L-alanine ligase">
    <location>
        <begin position="1"/>
        <end position="455"/>
    </location>
</feature>
<feature type="binding site" evidence="1">
    <location>
        <begin position="109"/>
        <end position="115"/>
    </location>
    <ligand>
        <name>ATP</name>
        <dbReference type="ChEBI" id="CHEBI:30616"/>
    </ligand>
</feature>
<organism>
    <name type="scientific">Caldicellulosiruptor saccharolyticus (strain ATCC 43494 / DSM 8903 / Tp8T 6331)</name>
    <dbReference type="NCBI Taxonomy" id="351627"/>
    <lineage>
        <taxon>Bacteria</taxon>
        <taxon>Bacillati</taxon>
        <taxon>Bacillota</taxon>
        <taxon>Bacillota incertae sedis</taxon>
        <taxon>Caldicellulosiruptorales</taxon>
        <taxon>Caldicellulosiruptoraceae</taxon>
        <taxon>Caldicellulosiruptor</taxon>
    </lineage>
</organism>